<gene>
    <name type="primary">Podxl</name>
    <name type="synonym">Pclp1</name>
</gene>
<reference key="1">
    <citation type="journal article" date="1999" name="Immunity">
        <title>Identification of podocalyxin-like protein 1 as a novel cell surface marker for hemangioblasts in the murine aorta-gonad-mesonephros region.</title>
        <authorList>
            <person name="Hara T."/>
            <person name="Nakano Y."/>
            <person name="Tanaka M."/>
            <person name="Tamura K."/>
            <person name="Sekiguchi T."/>
            <person name="Minehata K."/>
            <person name="Copeland N.G."/>
            <person name="Jenkins N.A."/>
            <person name="Okabe M."/>
            <person name="Kogo H."/>
            <person name="Mukouyama Y."/>
            <person name="Miyajima A."/>
        </authorList>
    </citation>
    <scope>NUCLEOTIDE SEQUENCE [MRNA]</scope>
</reference>
<reference key="2">
    <citation type="submission" date="2000-07" db="EMBL/GenBank/DDBJ databases">
        <title>Gene structure of mouse podocalyxin.</title>
        <authorList>
            <person name="Kershaw D.B."/>
            <person name="Li J."/>
        </authorList>
    </citation>
    <scope>NUCLEOTIDE SEQUENCE [MRNA]</scope>
</reference>
<reference key="3">
    <citation type="journal article" date="2004" name="Genome Res.">
        <title>The status, quality, and expansion of the NIH full-length cDNA project: the Mammalian Gene Collection (MGC).</title>
        <authorList>
            <consortium name="The MGC Project Team"/>
        </authorList>
    </citation>
    <scope>NUCLEOTIDE SEQUENCE [LARGE SCALE MRNA]</scope>
    <source>
        <strain>C57BL/6J</strain>
        <tissue>Brain</tissue>
    </source>
</reference>
<reference key="4">
    <citation type="journal article" date="2001" name="J. Exp. Med.">
        <title>Anuria, omphalocele, and perinatal lethality in mice lacking the CD34-related protein podocalyxin.</title>
        <authorList>
            <person name="Doyonnas R."/>
            <person name="Kershaw D.B."/>
            <person name="Duhme C."/>
            <person name="Merkens H."/>
            <person name="Chelliah S."/>
            <person name="Graf T."/>
            <person name="McNagny K.M."/>
        </authorList>
    </citation>
    <scope>FUNCTION</scope>
    <scope>DISRUPTION PHENOTYPE</scope>
    <scope>TISSUE SPECIFICITY</scope>
</reference>
<reference key="5">
    <citation type="journal article" date="2007" name="PLoS ONE">
        <title>The CD34-related molecule podocalyxin is a potent inducer of microvillus formation.</title>
        <authorList>
            <person name="Nielsen J.S."/>
            <person name="Graves M.L."/>
            <person name="Chelliah S."/>
            <person name="Vogl A.W."/>
            <person name="Roskelley C.D."/>
            <person name="McNagny K.M."/>
        </authorList>
    </citation>
    <scope>FUNCTION</scope>
    <scope>SUBCELLULAR LOCATION</scope>
</reference>
<reference key="6">
    <citation type="journal article" date="2010" name="Cell">
        <title>A tissue-specific atlas of mouse protein phosphorylation and expression.</title>
        <authorList>
            <person name="Huttlin E.L."/>
            <person name="Jedrychowski M.P."/>
            <person name="Elias J.E."/>
            <person name="Goswami T."/>
            <person name="Rad R."/>
            <person name="Beausoleil S.A."/>
            <person name="Villen J."/>
            <person name="Haas W."/>
            <person name="Sowa M.E."/>
            <person name="Gygi S.P."/>
        </authorList>
    </citation>
    <scope>PHOSPHORYLATION [LARGE SCALE ANALYSIS] AT THR-463</scope>
    <scope>IDENTIFICATION BY MASS SPECTROMETRY [LARGE SCALE ANALYSIS]</scope>
    <source>
        <tissue>Brain</tissue>
        <tissue>Brown adipose tissue</tissue>
        <tissue>Heart</tissue>
        <tissue>Kidney</tissue>
        <tissue>Liver</tissue>
        <tissue>Lung</tissue>
        <tissue>Pancreas</tissue>
        <tissue>Spleen</tissue>
    </source>
</reference>
<comment type="function">
    <text evidence="5 6">Involved in the regulation of both adhesion and cell morphology and cancer progression. Functions as an anti-adhesive molecule that maintains an open filtration pathway between neighboring foot processes in the podocyte by charge repulsion. Acts as a pro-adhesive molecule, enhancing the adherence of cells to immobilized ligands, increasing the rate of migration and cell-cell contacts in an integrin-dependent manner. Induces the formation of apical actin-dependent microvilli. Involved in the formation of a preapical plasma membrane subdomain to set up initial epithelial polarization and the apical lumen formation during renal tubulogenesis. Plays a role in cancer development and aggressiveness by inducing cell migration and invasion through its interaction with the actin-binding protein EZR. Affects EZR-dependent signaling events, leading to increased activities of the MAPK and PI3K pathways in cancer cells.</text>
</comment>
<comment type="subunit">
    <text evidence="1">Monomer; when associated with the membrane raft. Oligomer; when integrated in the apical membrane. Found in a complex with EZR, PODXL and NHERF2. Associates with the actin cytoskeleton through complex formation with EZR and NHERF2. Interacts (via the C-terminal PDZ-binding motif DTHL) with NHERF1 (via the PDZ domains); interaction is not detected in glomerular epithelium cells, take place early in the secretory pathway and is necessary for its apical membrane sorting. Interacts (via the C-terminal PDZ-binding motif DTHL) with NHERF2 (via the PDZ 1 domain); interaction is detected in glomerular epithelium cells. Interacts with EZR (By similarity).</text>
</comment>
<comment type="subcellular location">
    <subcellularLocation>
        <location evidence="6">Apical cell membrane</location>
    </subcellularLocation>
    <subcellularLocation>
        <location evidence="6">Cell projection</location>
        <location evidence="6">Microvillus</location>
    </subcellularLocation>
    <subcellularLocation>
        <location evidence="1">Membrane raft</location>
    </subcellularLocation>
    <subcellularLocation>
        <location evidence="1">Cell projection</location>
        <location evidence="1">Lamellipodium</location>
    </subcellularLocation>
    <subcellularLocation>
        <location evidence="1">Cell projection</location>
        <location evidence="1">Filopodium</location>
    </subcellularLocation>
    <subcellularLocation>
        <location evidence="1">Cell projection</location>
        <location evidence="1">Ruffle</location>
    </subcellularLocation>
    <subcellularLocation>
        <location evidence="7">Membrane</location>
        <topology evidence="7">Single-pass type I membrane protein</topology>
    </subcellularLocation>
    <text evidence="1">In single attached epithelial cells is restricted to a preapical pole on the free plasma membrane whereas other apical and basolateral proteins are not yet polarized. Colocalizes with NHERF2 at the apical plasma membrane during epithelial polarization. Colocalizes with NHERF1 at the trans-Golgi network (transiently) and at the apical plasma membrane. Its association with the membrane raft is transient. Forms granular, punctuated pattern, forming patches, preferentially adopting a polar distribution, located on the migrating poles of the cell or forming clusters along the terminal ends of filipodia establishing contact with the endothelial cells. Colocalizes with the submembrane actin of lamellipodia, particularly associated with ruffles. Colocalizes with vinculin at protrusions of cells. Colocalizes with ITGB1. Colocalizes with EZR and NHERF2 at the apical cell membrane of glomerular epithelium cells (By similarity). Colocalizes with actin filaments, EZR and NHERF1 in a punctate pattern at the apical cell surface where microvilli form. Colocalizes with PARD3, PRKCI, EXOC5, OCLN, RAB11A and RAB8A in apical membrane initiation sites (AMIS) during the generation of apical surface and luminogenesis (By similarity).</text>
</comment>
<comment type="tissue specificity">
    <text evidence="5">Expressed in liver cells and hematopoietic cells (at protein level). Glomerular epithelium cell (podocyte).</text>
</comment>
<comment type="domain">
    <text evidence="1">Both the O-glycan-rich domain of the extracellular domain and the C-terminus PDZ-binding motif (DTHL) in the cytoplasmic tail harbor an apical sorting signal. The cytoplasmic domain is necessary for the apical membrane targeting and renal tubulogenesis. The large highly anionic extracellular domain allows to maintain open filtration pathways between neighboring podocyte foot processes. The cytoplasmic C-terminus PDZ-binding motif (DTHL) is essential for interaction with NHERF1 and for targeting NHERF1 to the apical cell membrane. The extracellular domain is necessary for microvillus formation (By similarity).</text>
</comment>
<comment type="PTM">
    <text evidence="1">N- and O-linked glycosylated. Sialoglycoprotein (By similarity).</text>
</comment>
<comment type="disruption phenotype">
    <text evidence="5">Die within the first 24 hours of postnatal life from profound defects in kidney and/or gut formation. They are anuric (no measurable urine in the bladder), and fail to generate the extensive interdigitated foot process and instead retain cell junctions between immature podocytes.</text>
</comment>
<comment type="similarity">
    <text evidence="7">Belongs to the podocalyxin family.</text>
</comment>
<sequence length="503" mass="53389">MPPTTALSALLLLLLSPASHSHNGNETSTSAIKSSTVQSHQSATTSTEVTTGHPVASTLASTQPSNPTPFTTSTQSPSMPTSTPNPTSNQSGGNLTSSVSEVDKTKTSSPSSTAFTSSSGQTASSGGKSGDSFTTAPTTTLGLINVSSQPTDLNTTSKLLSTPTTDNTTSPQQPVDSSPSTASHPVGQHTPAAVPSSSGSTPSTDNSTLTWKPTTHKPLGTSEATQPLTSQTPGITTLPVSTLQQSMASTVGTTTEEFTHLISNGTPVAPPGPSTPSPIWAFGNYQLNCEPPIRPDEELLILNLTRASLCERSPLDEKEKLVELLCHSVKASFKPAEDLCTLHVAPILDNQAVAVKRIIIETKLSPKAVYELLKDRWDDLTEAGVSDMKLGKEGPPEVNEDRFSLPLIITIVCMASFLLLVAALYGCCHQRISQRKDQQRLTEELQTVENGYHDNPTLEVMETPSEMQEKKVVNLNGELGDSWIVPLDNLTKDDLDEEEDTHL</sequence>
<organism>
    <name type="scientific">Mus musculus</name>
    <name type="common">Mouse</name>
    <dbReference type="NCBI Taxonomy" id="10090"/>
    <lineage>
        <taxon>Eukaryota</taxon>
        <taxon>Metazoa</taxon>
        <taxon>Chordata</taxon>
        <taxon>Craniata</taxon>
        <taxon>Vertebrata</taxon>
        <taxon>Euteleostomi</taxon>
        <taxon>Mammalia</taxon>
        <taxon>Eutheria</taxon>
        <taxon>Euarchontoglires</taxon>
        <taxon>Glires</taxon>
        <taxon>Rodentia</taxon>
        <taxon>Myomorpha</taxon>
        <taxon>Muroidea</taxon>
        <taxon>Muridae</taxon>
        <taxon>Murinae</taxon>
        <taxon>Mus</taxon>
        <taxon>Mus</taxon>
    </lineage>
</organism>
<dbReference type="EMBL" id="AB028048">
    <property type="protein sequence ID" value="BAA86912.1"/>
    <property type="molecule type" value="mRNA"/>
</dbReference>
<dbReference type="EMBL" id="AF290209">
    <property type="protein sequence ID" value="AAG02458.1"/>
    <property type="molecule type" value="mRNA"/>
</dbReference>
<dbReference type="EMBL" id="BC052442">
    <property type="protein sequence ID" value="AAH52442.1"/>
    <property type="molecule type" value="mRNA"/>
</dbReference>
<dbReference type="EMBL" id="BC054530">
    <property type="protein sequence ID" value="AAH54530.1"/>
    <property type="molecule type" value="mRNA"/>
</dbReference>
<dbReference type="CCDS" id="CCDS19983.1"/>
<dbReference type="RefSeq" id="NP_038751.2">
    <property type="nucleotide sequence ID" value="NM_013723.3"/>
</dbReference>
<dbReference type="FunCoup" id="Q9R0M4">
    <property type="interactions" value="108"/>
</dbReference>
<dbReference type="STRING" id="10090.ENSMUSP00000026698"/>
<dbReference type="GlyCosmos" id="Q9R0M4">
    <property type="glycosylation" value="8 sites, No reported glycans"/>
</dbReference>
<dbReference type="GlyGen" id="Q9R0M4">
    <property type="glycosylation" value="10 sites, 2 N-linked glycans (2 sites)"/>
</dbReference>
<dbReference type="iPTMnet" id="Q9R0M4"/>
<dbReference type="PhosphoSitePlus" id="Q9R0M4"/>
<dbReference type="SwissPalm" id="Q9R0M4"/>
<dbReference type="jPOST" id="Q9R0M4"/>
<dbReference type="PaxDb" id="10090-ENSMUSP00000026698"/>
<dbReference type="ProteomicsDB" id="291765"/>
<dbReference type="Antibodypedia" id="971">
    <property type="antibodies" value="1259 antibodies from 45 providers"/>
</dbReference>
<dbReference type="DNASU" id="27205"/>
<dbReference type="Ensembl" id="ENSMUST00000026698.8">
    <property type="protein sequence ID" value="ENSMUSP00000026698.8"/>
    <property type="gene ID" value="ENSMUSG00000025608.10"/>
</dbReference>
<dbReference type="GeneID" id="27205"/>
<dbReference type="KEGG" id="mmu:27205"/>
<dbReference type="UCSC" id="uc009bgh.2">
    <property type="organism name" value="mouse"/>
</dbReference>
<dbReference type="AGR" id="MGI:1351317"/>
<dbReference type="CTD" id="5420"/>
<dbReference type="MGI" id="MGI:1351317">
    <property type="gene designation" value="Podxl"/>
</dbReference>
<dbReference type="VEuPathDB" id="HostDB:ENSMUSG00000025608"/>
<dbReference type="eggNOG" id="ENOG502S2JU">
    <property type="taxonomic scope" value="Eukaryota"/>
</dbReference>
<dbReference type="GeneTree" id="ENSGT00730000111314"/>
<dbReference type="HOGENOM" id="CLU_032485_0_0_1"/>
<dbReference type="InParanoid" id="Q9R0M4"/>
<dbReference type="OMA" id="GNNWTKC"/>
<dbReference type="OrthoDB" id="9948358at2759"/>
<dbReference type="PhylomeDB" id="Q9R0M4"/>
<dbReference type="TreeFam" id="TF333564"/>
<dbReference type="BioGRID-ORCS" id="27205">
    <property type="hits" value="4 hits in 76 CRISPR screens"/>
</dbReference>
<dbReference type="ChiTaRS" id="Podxl">
    <property type="organism name" value="mouse"/>
</dbReference>
<dbReference type="PRO" id="PR:Q9R0M4"/>
<dbReference type="Proteomes" id="UP000000589">
    <property type="component" value="Chromosome 6"/>
</dbReference>
<dbReference type="RNAct" id="Q9R0M4">
    <property type="molecule type" value="protein"/>
</dbReference>
<dbReference type="Bgee" id="ENSMUSG00000025608">
    <property type="expression patterns" value="Expressed in renal corpuscle and 284 other cell types or tissues"/>
</dbReference>
<dbReference type="ExpressionAtlas" id="Q9R0M4">
    <property type="expression patterns" value="baseline and differential"/>
</dbReference>
<dbReference type="GO" id="GO:0016324">
    <property type="term" value="C:apical plasma membrane"/>
    <property type="evidence" value="ECO:0000314"/>
    <property type="project" value="UniProtKB"/>
</dbReference>
<dbReference type="GO" id="GO:0005737">
    <property type="term" value="C:cytoplasm"/>
    <property type="evidence" value="ECO:0000250"/>
    <property type="project" value="UniProtKB"/>
</dbReference>
<dbReference type="GO" id="GO:0030175">
    <property type="term" value="C:filopodium"/>
    <property type="evidence" value="ECO:0000250"/>
    <property type="project" value="UniProtKB"/>
</dbReference>
<dbReference type="GO" id="GO:0098978">
    <property type="term" value="C:glutamatergic synapse"/>
    <property type="evidence" value="ECO:0000314"/>
    <property type="project" value="SynGO"/>
</dbReference>
<dbReference type="GO" id="GO:0030027">
    <property type="term" value="C:lamellipodium"/>
    <property type="evidence" value="ECO:0000250"/>
    <property type="project" value="UniProtKB"/>
</dbReference>
<dbReference type="GO" id="GO:0045121">
    <property type="term" value="C:membrane raft"/>
    <property type="evidence" value="ECO:0007669"/>
    <property type="project" value="UniProtKB-SubCell"/>
</dbReference>
<dbReference type="GO" id="GO:0031528">
    <property type="term" value="C:microvillus membrane"/>
    <property type="evidence" value="ECO:0000314"/>
    <property type="project" value="UniProtKB"/>
</dbReference>
<dbReference type="GO" id="GO:0005886">
    <property type="term" value="C:plasma membrane"/>
    <property type="evidence" value="ECO:0000314"/>
    <property type="project" value="MGI"/>
</dbReference>
<dbReference type="GO" id="GO:0042734">
    <property type="term" value="C:presynaptic membrane"/>
    <property type="evidence" value="ECO:0000314"/>
    <property type="project" value="SynGO"/>
</dbReference>
<dbReference type="GO" id="GO:0001726">
    <property type="term" value="C:ruffle"/>
    <property type="evidence" value="ECO:0000250"/>
    <property type="project" value="UniProtKB"/>
</dbReference>
<dbReference type="GO" id="GO:0036057">
    <property type="term" value="C:slit diaphragm"/>
    <property type="evidence" value="ECO:0000250"/>
    <property type="project" value="UniProtKB"/>
</dbReference>
<dbReference type="GO" id="GO:0007155">
    <property type="term" value="P:cell adhesion"/>
    <property type="evidence" value="ECO:0007669"/>
    <property type="project" value="UniProtKB-KW"/>
</dbReference>
<dbReference type="GO" id="GO:0016477">
    <property type="term" value="P:cell migration"/>
    <property type="evidence" value="ECO:0000315"/>
    <property type="project" value="UniProtKB"/>
</dbReference>
<dbReference type="GO" id="GO:0072175">
    <property type="term" value="P:epithelial tube formation"/>
    <property type="evidence" value="ECO:0000250"/>
    <property type="project" value="UniProtKB"/>
</dbReference>
<dbReference type="GO" id="GO:0050900">
    <property type="term" value="P:leukocyte migration"/>
    <property type="evidence" value="ECO:0000315"/>
    <property type="project" value="MGI"/>
</dbReference>
<dbReference type="GO" id="GO:0007162">
    <property type="term" value="P:negative regulation of cell adhesion"/>
    <property type="evidence" value="ECO:0000250"/>
    <property type="project" value="UniProtKB"/>
</dbReference>
<dbReference type="GO" id="GO:0022408">
    <property type="term" value="P:negative regulation of cell-cell adhesion"/>
    <property type="evidence" value="ECO:0000315"/>
    <property type="project" value="UniProtKB"/>
</dbReference>
<dbReference type="GO" id="GO:0072015">
    <property type="term" value="P:podocyte development"/>
    <property type="evidence" value="ECO:0000250"/>
    <property type="project" value="UniProtKB"/>
</dbReference>
<dbReference type="GO" id="GO:0030335">
    <property type="term" value="P:positive regulation of cell migration"/>
    <property type="evidence" value="ECO:0000250"/>
    <property type="project" value="UniProtKB"/>
</dbReference>
<dbReference type="GO" id="GO:0033634">
    <property type="term" value="P:positive regulation of cell-cell adhesion mediated by integrin"/>
    <property type="evidence" value="ECO:0000250"/>
    <property type="project" value="UniProtKB"/>
</dbReference>
<dbReference type="GO" id="GO:0032534">
    <property type="term" value="P:regulation of microvillus assembly"/>
    <property type="evidence" value="ECO:0000314"/>
    <property type="project" value="UniProtKB"/>
</dbReference>
<dbReference type="GO" id="GO:0051963">
    <property type="term" value="P:regulation of synapse assembly"/>
    <property type="evidence" value="ECO:0000314"/>
    <property type="project" value="SynGO"/>
</dbReference>
<dbReference type="InterPro" id="IPR013836">
    <property type="entry name" value="CD34/Podocalyxin"/>
</dbReference>
<dbReference type="InterPro" id="IPR017403">
    <property type="entry name" value="PODXL"/>
</dbReference>
<dbReference type="PANTHER" id="PTHR12067">
    <property type="entry name" value="PODOCALYXIN"/>
    <property type="match status" value="1"/>
</dbReference>
<dbReference type="PANTHER" id="PTHR12067:SF5">
    <property type="entry name" value="PODOCALYXIN"/>
    <property type="match status" value="1"/>
</dbReference>
<dbReference type="Pfam" id="PF06365">
    <property type="entry name" value="CD34_antigen"/>
    <property type="match status" value="1"/>
</dbReference>
<dbReference type="PIRSF" id="PIRSF038143">
    <property type="entry name" value="Podocalyxin-like_p1"/>
    <property type="match status" value="1"/>
</dbReference>
<proteinExistence type="evidence at protein level"/>
<name>PODXL_MOUSE</name>
<keyword id="KW-0130">Cell adhesion</keyword>
<keyword id="KW-1003">Cell membrane</keyword>
<keyword id="KW-0966">Cell projection</keyword>
<keyword id="KW-0325">Glycoprotein</keyword>
<keyword id="KW-0472">Membrane</keyword>
<keyword id="KW-0597">Phosphoprotein</keyword>
<keyword id="KW-1185">Reference proteome</keyword>
<keyword id="KW-0732">Signal</keyword>
<keyword id="KW-0812">Transmembrane</keyword>
<keyword id="KW-1133">Transmembrane helix</keyword>
<feature type="signal peptide" evidence="3">
    <location>
        <begin position="1"/>
        <end position="21"/>
    </location>
</feature>
<feature type="chain" id="PRO_0000024755" description="Podocalyxin">
    <location>
        <begin position="22"/>
        <end position="503"/>
    </location>
</feature>
<feature type="topological domain" description="Extracellular" evidence="3">
    <location>
        <begin position="22"/>
        <end position="404"/>
    </location>
</feature>
<feature type="transmembrane region" description="Helical" evidence="3">
    <location>
        <begin position="405"/>
        <end position="425"/>
    </location>
</feature>
<feature type="topological domain" description="Cytoplasmic" evidence="3">
    <location>
        <begin position="426"/>
        <end position="503"/>
    </location>
</feature>
<feature type="region of interest" description="Disordered" evidence="4">
    <location>
        <begin position="19"/>
        <end position="236"/>
    </location>
</feature>
<feature type="compositionally biased region" description="Polar residues" evidence="4">
    <location>
        <begin position="20"/>
        <end position="50"/>
    </location>
</feature>
<feature type="compositionally biased region" description="Low complexity" evidence="4">
    <location>
        <begin position="61"/>
        <end position="91"/>
    </location>
</feature>
<feature type="compositionally biased region" description="Low complexity" evidence="4">
    <location>
        <begin position="107"/>
        <end position="126"/>
    </location>
</feature>
<feature type="compositionally biased region" description="Polar residues" evidence="4">
    <location>
        <begin position="131"/>
        <end position="183"/>
    </location>
</feature>
<feature type="compositionally biased region" description="Low complexity" evidence="4">
    <location>
        <begin position="196"/>
        <end position="208"/>
    </location>
</feature>
<feature type="compositionally biased region" description="Polar residues" evidence="4">
    <location>
        <begin position="222"/>
        <end position="236"/>
    </location>
</feature>
<feature type="modified residue" description="Phosphothreonine" evidence="8">
    <location>
        <position position="463"/>
    </location>
</feature>
<feature type="modified residue" description="Phosphoserine" evidence="2">
    <location>
        <position position="482"/>
    </location>
</feature>
<feature type="modified residue" description="Phosphothreonine" evidence="2">
    <location>
        <position position="501"/>
    </location>
</feature>
<feature type="glycosylation site" description="N-linked (GlcNAc...) asparagine" evidence="3">
    <location>
        <position position="25"/>
    </location>
</feature>
<feature type="glycosylation site" description="N-linked (GlcNAc...) asparagine" evidence="3">
    <location>
        <position position="89"/>
    </location>
</feature>
<feature type="glycosylation site" description="N-linked (GlcNAc...) asparagine" evidence="3">
    <location>
        <position position="94"/>
    </location>
</feature>
<feature type="glycosylation site" description="N-linked (GlcNAc...) asparagine" evidence="3">
    <location>
        <position position="145"/>
    </location>
</feature>
<feature type="glycosylation site" description="N-linked (GlcNAc...) asparagine" evidence="3">
    <location>
        <position position="154"/>
    </location>
</feature>
<feature type="glycosylation site" description="N-linked (GlcNAc...) asparagine" evidence="3">
    <location>
        <position position="167"/>
    </location>
</feature>
<feature type="glycosylation site" description="N-linked (GlcNAc...) asparagine" evidence="3">
    <location>
        <position position="206"/>
    </location>
</feature>
<feature type="glycosylation site" description="N-linked (GlcNAc...) asparagine" evidence="3">
    <location>
        <position position="303"/>
    </location>
</feature>
<feature type="sequence variant">
    <original>S</original>
    <variation>F</variation>
    <location>
        <position position="78"/>
    </location>
</feature>
<accession>Q9R0M4</accession>
<accession>Q9ESZ1</accession>
<evidence type="ECO:0000250" key="1"/>
<evidence type="ECO:0000250" key="2">
    <source>
        <dbReference type="UniProtKB" id="O00592"/>
    </source>
</evidence>
<evidence type="ECO:0000255" key="3"/>
<evidence type="ECO:0000256" key="4">
    <source>
        <dbReference type="SAM" id="MobiDB-lite"/>
    </source>
</evidence>
<evidence type="ECO:0000269" key="5">
    <source>
    </source>
</evidence>
<evidence type="ECO:0000269" key="6">
    <source>
    </source>
</evidence>
<evidence type="ECO:0000305" key="7"/>
<evidence type="ECO:0007744" key="8">
    <source>
    </source>
</evidence>
<protein>
    <recommendedName>
        <fullName>Podocalyxin</fullName>
    </recommendedName>
    <alternativeName>
        <fullName>Podocalyxin-like protein 1</fullName>
        <shortName>PC</shortName>
        <shortName>PCLP-1</shortName>
    </alternativeName>
</protein>